<keyword id="KW-0067">ATP-binding</keyword>
<keyword id="KW-0143">Chaperone</keyword>
<keyword id="KW-0963">Cytoplasm</keyword>
<keyword id="KW-0547">Nucleotide-binding</keyword>
<keyword id="KW-0346">Stress response</keyword>
<reference key="1">
    <citation type="submission" date="2007-09" db="EMBL/GenBank/DDBJ databases">
        <title>Complete genome sequence of Rickettsia canadensis.</title>
        <authorList>
            <person name="Madan A."/>
            <person name="Fahey J."/>
            <person name="Helton E."/>
            <person name="Ketteman M."/>
            <person name="Madan A."/>
            <person name="Rodrigues S."/>
            <person name="Sanchez A."/>
            <person name="Whiting M."/>
            <person name="Dasch G."/>
            <person name="Eremeeva M."/>
        </authorList>
    </citation>
    <scope>NUCLEOTIDE SEQUENCE [LARGE SCALE GENOMIC DNA]</scope>
    <source>
        <strain>McKiel</strain>
    </source>
</reference>
<name>HTPG_RICCK</name>
<evidence type="ECO:0000255" key="1">
    <source>
        <dbReference type="HAMAP-Rule" id="MF_00505"/>
    </source>
</evidence>
<accession>A8F060</accession>
<gene>
    <name evidence="1" type="primary">htpG</name>
    <name type="ordered locus">A1E_05385</name>
</gene>
<comment type="function">
    <text evidence="1">Molecular chaperone. Has ATPase activity.</text>
</comment>
<comment type="subunit">
    <text evidence="1">Homodimer.</text>
</comment>
<comment type="subcellular location">
    <subcellularLocation>
        <location evidence="1">Cytoplasm</location>
    </subcellularLocation>
</comment>
<comment type="similarity">
    <text evidence="1">Belongs to the heat shock protein 90 family.</text>
</comment>
<dbReference type="EMBL" id="CP000409">
    <property type="protein sequence ID" value="ABV73993.1"/>
    <property type="molecule type" value="Genomic_DNA"/>
</dbReference>
<dbReference type="RefSeq" id="WP_012149188.1">
    <property type="nucleotide sequence ID" value="NC_009879.1"/>
</dbReference>
<dbReference type="SMR" id="A8F060"/>
<dbReference type="STRING" id="293613.A1E_05385"/>
<dbReference type="KEGG" id="rcm:A1E_05385"/>
<dbReference type="eggNOG" id="COG0326">
    <property type="taxonomic scope" value="Bacteria"/>
</dbReference>
<dbReference type="HOGENOM" id="CLU_006684_3_0_5"/>
<dbReference type="Proteomes" id="UP000007056">
    <property type="component" value="Chromosome"/>
</dbReference>
<dbReference type="GO" id="GO:0005737">
    <property type="term" value="C:cytoplasm"/>
    <property type="evidence" value="ECO:0007669"/>
    <property type="project" value="UniProtKB-SubCell"/>
</dbReference>
<dbReference type="GO" id="GO:0005524">
    <property type="term" value="F:ATP binding"/>
    <property type="evidence" value="ECO:0007669"/>
    <property type="project" value="UniProtKB-UniRule"/>
</dbReference>
<dbReference type="GO" id="GO:0016887">
    <property type="term" value="F:ATP hydrolysis activity"/>
    <property type="evidence" value="ECO:0007669"/>
    <property type="project" value="InterPro"/>
</dbReference>
<dbReference type="GO" id="GO:0140662">
    <property type="term" value="F:ATP-dependent protein folding chaperone"/>
    <property type="evidence" value="ECO:0007669"/>
    <property type="project" value="InterPro"/>
</dbReference>
<dbReference type="GO" id="GO:0051082">
    <property type="term" value="F:unfolded protein binding"/>
    <property type="evidence" value="ECO:0007669"/>
    <property type="project" value="UniProtKB-UniRule"/>
</dbReference>
<dbReference type="CDD" id="cd16927">
    <property type="entry name" value="HATPase_Hsp90-like"/>
    <property type="match status" value="1"/>
</dbReference>
<dbReference type="FunFam" id="3.30.565.10:FF:000009">
    <property type="entry name" value="Molecular chaperone HtpG"/>
    <property type="match status" value="1"/>
</dbReference>
<dbReference type="Gene3D" id="3.30.230.80">
    <property type="match status" value="1"/>
</dbReference>
<dbReference type="Gene3D" id="3.40.50.11260">
    <property type="match status" value="1"/>
</dbReference>
<dbReference type="Gene3D" id="1.20.120.790">
    <property type="entry name" value="Heat shock protein 90, C-terminal domain"/>
    <property type="match status" value="1"/>
</dbReference>
<dbReference type="Gene3D" id="3.30.565.10">
    <property type="entry name" value="Histidine kinase-like ATPase, C-terminal domain"/>
    <property type="match status" value="1"/>
</dbReference>
<dbReference type="HAMAP" id="MF_00505">
    <property type="entry name" value="HSP90"/>
    <property type="match status" value="1"/>
</dbReference>
<dbReference type="InterPro" id="IPR036890">
    <property type="entry name" value="HATPase_C_sf"/>
</dbReference>
<dbReference type="InterPro" id="IPR019805">
    <property type="entry name" value="Heat_shock_protein_90_CS"/>
</dbReference>
<dbReference type="InterPro" id="IPR037196">
    <property type="entry name" value="HSP90_C"/>
</dbReference>
<dbReference type="InterPro" id="IPR001404">
    <property type="entry name" value="Hsp90_fam"/>
</dbReference>
<dbReference type="InterPro" id="IPR020575">
    <property type="entry name" value="Hsp90_N"/>
</dbReference>
<dbReference type="InterPro" id="IPR020568">
    <property type="entry name" value="Ribosomal_Su5_D2-typ_SF"/>
</dbReference>
<dbReference type="NCBIfam" id="NF003555">
    <property type="entry name" value="PRK05218.1"/>
    <property type="match status" value="1"/>
</dbReference>
<dbReference type="PANTHER" id="PTHR11528">
    <property type="entry name" value="HEAT SHOCK PROTEIN 90 FAMILY MEMBER"/>
    <property type="match status" value="1"/>
</dbReference>
<dbReference type="Pfam" id="PF13589">
    <property type="entry name" value="HATPase_c_3"/>
    <property type="match status" value="1"/>
</dbReference>
<dbReference type="Pfam" id="PF00183">
    <property type="entry name" value="HSP90"/>
    <property type="match status" value="1"/>
</dbReference>
<dbReference type="PIRSF" id="PIRSF002583">
    <property type="entry name" value="Hsp90"/>
    <property type="match status" value="1"/>
</dbReference>
<dbReference type="PRINTS" id="PR00775">
    <property type="entry name" value="HEATSHOCK90"/>
</dbReference>
<dbReference type="SMART" id="SM00387">
    <property type="entry name" value="HATPase_c"/>
    <property type="match status" value="1"/>
</dbReference>
<dbReference type="SUPFAM" id="SSF55874">
    <property type="entry name" value="ATPase domain of HSP90 chaperone/DNA topoisomerase II/histidine kinase"/>
    <property type="match status" value="1"/>
</dbReference>
<dbReference type="SUPFAM" id="SSF110942">
    <property type="entry name" value="HSP90 C-terminal domain"/>
    <property type="match status" value="1"/>
</dbReference>
<dbReference type="SUPFAM" id="SSF54211">
    <property type="entry name" value="Ribosomal protein S5 domain 2-like"/>
    <property type="match status" value="1"/>
</dbReference>
<dbReference type="PROSITE" id="PS00298">
    <property type="entry name" value="HSP90"/>
    <property type="match status" value="1"/>
</dbReference>
<protein>
    <recommendedName>
        <fullName evidence="1">Chaperone protein HtpG</fullName>
    </recommendedName>
    <alternativeName>
        <fullName evidence="1">Heat shock protein HtpG</fullName>
    </alternativeName>
    <alternativeName>
        <fullName evidence="1">High temperature protein G</fullName>
    </alternativeName>
</protein>
<organism>
    <name type="scientific">Rickettsia canadensis (strain McKiel)</name>
    <dbReference type="NCBI Taxonomy" id="293613"/>
    <lineage>
        <taxon>Bacteria</taxon>
        <taxon>Pseudomonadati</taxon>
        <taxon>Pseudomonadota</taxon>
        <taxon>Alphaproteobacteria</taxon>
        <taxon>Rickettsiales</taxon>
        <taxon>Rickettsiaceae</taxon>
        <taxon>Rickettsieae</taxon>
        <taxon>Rickettsia</taxon>
        <taxon>belli group</taxon>
    </lineage>
</organism>
<proteinExistence type="inferred from homology"/>
<feature type="chain" id="PRO_1000014947" description="Chaperone protein HtpG">
    <location>
        <begin position="1"/>
        <end position="623"/>
    </location>
</feature>
<feature type="region of interest" description="A; substrate-binding" evidence="1">
    <location>
        <begin position="1"/>
        <end position="328"/>
    </location>
</feature>
<feature type="region of interest" description="B" evidence="1">
    <location>
        <begin position="329"/>
        <end position="544"/>
    </location>
</feature>
<feature type="region of interest" description="C" evidence="1">
    <location>
        <begin position="545"/>
        <end position="623"/>
    </location>
</feature>
<sequence length="623" mass="70809">MTQEKKKFDAEVGKILNLMIHSLYSNKEIFMRELISNASDACDKLRYLSQSNNTLVAGDSNFKITVKIDKNNGQIIIRDNGIGMNKEDLIENLGTIARSGTANFLKNLSGDSKKDNMLIGQFGVGFYSSFMVADKVTVTSRKAGEDKVYVWESDGLGEYIVSNSGKEFTRGTAIVLNIKKEEDNFLDHFRLKHIVKSYSDHIAVPIYFFDENGNSEIQLNSASALWTRPKLEITEEQYKEFYKSLSYTIDDPWITLHNKNEGAIEFTNLLFIPSSKTFDLFHPDRKRRVKLYIKRVFISDENIDLIPSYLRFLRGVVDSEDLPLNISRESLQHNSILDKIKNAITKRVLAELKKKKEESPEDYNKFWSNFGGALKEGLCESTTDHEKLLEVCIFRSALHNKMISLDEYIANFKEGQNTIYYLSGDNPDKLLSSPQIEGLLSKNIDVLLFTDTVDDFWVNVNSEYKGHAIKSATRSDIDVEQTTSSSEEKNTDSKKSDDEYKLLTDYFKETLGDLVKDVKISKKLTSSPACLAVSESAMDIRMERFLIEQKQIANASAKNLELNPKNKIIEKIFNDLKANNKNNKELVNLIFDQACILEGEPVADTGAFSKRLNDIVQKAILSL</sequence>